<feature type="chain" id="PRO_0000342491" description="GDP-mannose pyrophosphatase">
    <location>
        <begin position="1"/>
        <end position="191"/>
    </location>
</feature>
<feature type="domain" description="Nudix hydrolase" evidence="2">
    <location>
        <begin position="43"/>
        <end position="180"/>
    </location>
</feature>
<feature type="short sequence motif" description="Nudix box">
    <location>
        <begin position="86"/>
        <end position="106"/>
    </location>
</feature>
<feature type="binding site" description="in other chain" evidence="1">
    <location>
        <position position="17"/>
    </location>
    <ligand>
        <name>GDP-alpha-D-mannose</name>
        <dbReference type="ChEBI" id="CHEBI:57527"/>
        <note>ligand shared between dimeric partners</note>
    </ligand>
</feature>
<feature type="binding site" evidence="1">
    <location>
        <begin position="38"/>
        <end position="40"/>
    </location>
    <ligand>
        <name>GDP-alpha-D-mannose</name>
        <dbReference type="ChEBI" id="CHEBI:57527"/>
        <note>ligand shared between dimeric partners</note>
    </ligand>
</feature>
<feature type="binding site" description="in other chain" evidence="1">
    <location>
        <position position="67"/>
    </location>
    <ligand>
        <name>GDP-alpha-D-mannose</name>
        <dbReference type="ChEBI" id="CHEBI:57527"/>
        <note>ligand shared between dimeric partners</note>
    </ligand>
</feature>
<feature type="binding site" description="in other chain" evidence="1">
    <location>
        <begin position="85"/>
        <end position="87"/>
    </location>
    <ligand>
        <name>GDP-alpha-D-mannose</name>
        <dbReference type="ChEBI" id="CHEBI:57527"/>
        <note>ligand shared between dimeric partners</note>
    </ligand>
</feature>
<feature type="binding site" evidence="1">
    <location>
        <position position="85"/>
    </location>
    <ligand>
        <name>Mg(2+)</name>
        <dbReference type="ChEBI" id="CHEBI:18420"/>
        <label>1</label>
    </ligand>
</feature>
<feature type="binding site" evidence="1">
    <location>
        <position position="100"/>
    </location>
    <ligand>
        <name>Mg(2+)</name>
        <dbReference type="ChEBI" id="CHEBI:18420"/>
        <label>2</label>
    </ligand>
</feature>
<feature type="binding site" description="in other chain" evidence="1">
    <location>
        <position position="104"/>
    </location>
    <ligand>
        <name>GDP-alpha-D-mannose</name>
        <dbReference type="ChEBI" id="CHEBI:57527"/>
        <note>ligand shared between dimeric partners</note>
    </ligand>
</feature>
<feature type="binding site" evidence="1">
    <location>
        <position position="104"/>
    </location>
    <ligand>
        <name>Mg(2+)</name>
        <dbReference type="ChEBI" id="CHEBI:18420"/>
        <label>1</label>
    </ligand>
</feature>
<feature type="binding site" evidence="1">
    <location>
        <position position="104"/>
    </location>
    <ligand>
        <name>Mg(2+)</name>
        <dbReference type="ChEBI" id="CHEBI:18420"/>
        <label>2</label>
    </ligand>
</feature>
<feature type="binding site" description="in other chain" evidence="1">
    <location>
        <position position="127"/>
    </location>
    <ligand>
        <name>GDP-alpha-D-mannose</name>
        <dbReference type="ChEBI" id="CHEBI:57527"/>
        <note>ligand shared between dimeric partners</note>
    </ligand>
</feature>
<feature type="binding site" description="in other chain" evidence="1">
    <location>
        <begin position="150"/>
        <end position="151"/>
    </location>
    <ligand>
        <name>GDP-alpha-D-mannose</name>
        <dbReference type="ChEBI" id="CHEBI:57527"/>
        <note>ligand shared between dimeric partners</note>
    </ligand>
</feature>
<feature type="binding site" evidence="1">
    <location>
        <position position="151"/>
    </location>
    <ligand>
        <name>Mg(2+)</name>
        <dbReference type="ChEBI" id="CHEBI:18420"/>
        <label>2</label>
    </ligand>
</feature>
<feature type="binding site" description="in other chain" evidence="1">
    <location>
        <position position="176"/>
    </location>
    <ligand>
        <name>GDP-alpha-D-mannose</name>
        <dbReference type="ChEBI" id="CHEBI:57527"/>
        <note>ligand shared between dimeric partners</note>
    </ligand>
</feature>
<keyword id="KW-0378">Hydrolase</keyword>
<keyword id="KW-0460">Magnesium</keyword>
<keyword id="KW-0479">Metal-binding</keyword>
<gene>
    <name type="primary">nudK</name>
    <name type="ordered locus">EcHS_A2596</name>
</gene>
<proteinExistence type="inferred from homology"/>
<reference key="1">
    <citation type="journal article" date="2008" name="J. Bacteriol.">
        <title>The pangenome structure of Escherichia coli: comparative genomic analysis of E. coli commensal and pathogenic isolates.</title>
        <authorList>
            <person name="Rasko D.A."/>
            <person name="Rosovitz M.J."/>
            <person name="Myers G.S.A."/>
            <person name="Mongodin E.F."/>
            <person name="Fricke W.F."/>
            <person name="Gajer P."/>
            <person name="Crabtree J."/>
            <person name="Sebaihia M."/>
            <person name="Thomson N.R."/>
            <person name="Chaudhuri R."/>
            <person name="Henderson I.R."/>
            <person name="Sperandio V."/>
            <person name="Ravel J."/>
        </authorList>
    </citation>
    <scope>NUCLEOTIDE SEQUENCE [LARGE SCALE GENOMIC DNA]</scope>
    <source>
        <strain>HS</strain>
    </source>
</reference>
<comment type="function">
    <text evidence="1">Nucleoside diphosphate sugar hydrolase that hydrolyzes GDP-mannose as its preferred substrate, yielding GMP and mannose-1-phosphate.</text>
</comment>
<comment type="catalytic activity">
    <reaction evidence="1">
        <text>GDP-alpha-D-mannose + H2O = alpha-D-mannose 1-phosphate + GMP + 2 H(+)</text>
        <dbReference type="Rhea" id="RHEA:27978"/>
        <dbReference type="ChEBI" id="CHEBI:15377"/>
        <dbReference type="ChEBI" id="CHEBI:15378"/>
        <dbReference type="ChEBI" id="CHEBI:57527"/>
        <dbReference type="ChEBI" id="CHEBI:58115"/>
        <dbReference type="ChEBI" id="CHEBI:58409"/>
    </reaction>
</comment>
<comment type="cofactor">
    <cofactor evidence="1">
        <name>Mg(2+)</name>
        <dbReference type="ChEBI" id="CHEBI:18420"/>
    </cofactor>
</comment>
<comment type="subunit">
    <text evidence="1">Homodimer.</text>
</comment>
<comment type="domain">
    <text evidence="1">In the dimer, the N-terminal domains are swapped between the two monomers, such that residues of both chains contribute to the active site.</text>
</comment>
<comment type="similarity">
    <text evidence="3">Belongs to the Nudix hydrolase family. NudK subfamily.</text>
</comment>
<name>NUDK_ECOHS</name>
<accession>A8A2V7</accession>
<protein>
    <recommendedName>
        <fullName>GDP-mannose pyrophosphatase</fullName>
        <ecNumber evidence="1">3.6.1.-</ecNumber>
    </recommendedName>
    <alternativeName>
        <fullName>GDP-mannose hydrolase</fullName>
    </alternativeName>
    <alternativeName>
        <fullName>GDPMK</fullName>
    </alternativeName>
</protein>
<sequence>MTQQITLIKDKILSDNYFTLHNITYDLTRKDGEVIRHKREVYDRGNGATILLYNTKKKTVVLIRQFRVATWVNGNESGQLIESCAGLLDNDEPEVCIRKEAIEETGYEVGEVRKLFELYMSPGGVTELIHFFIAEYSDNQRANAGGGVEDEDIEVLELPFSQALEMIKTGEIRDGKTVLLLNYLQTSHLMD</sequence>
<evidence type="ECO:0000250" key="1">
    <source>
        <dbReference type="UniProtKB" id="P37128"/>
    </source>
</evidence>
<evidence type="ECO:0000255" key="2">
    <source>
        <dbReference type="PROSITE-ProRule" id="PRU00794"/>
    </source>
</evidence>
<evidence type="ECO:0000305" key="3"/>
<organism>
    <name type="scientific">Escherichia coli O9:H4 (strain HS)</name>
    <dbReference type="NCBI Taxonomy" id="331112"/>
    <lineage>
        <taxon>Bacteria</taxon>
        <taxon>Pseudomonadati</taxon>
        <taxon>Pseudomonadota</taxon>
        <taxon>Gammaproteobacteria</taxon>
        <taxon>Enterobacterales</taxon>
        <taxon>Enterobacteriaceae</taxon>
        <taxon>Escherichia</taxon>
    </lineage>
</organism>
<dbReference type="EC" id="3.6.1.-" evidence="1"/>
<dbReference type="EMBL" id="CP000802">
    <property type="protein sequence ID" value="ABV06861.1"/>
    <property type="molecule type" value="Genomic_DNA"/>
</dbReference>
<dbReference type="RefSeq" id="WP_001300814.1">
    <property type="nucleotide sequence ID" value="NC_009800.1"/>
</dbReference>
<dbReference type="SMR" id="A8A2V7"/>
<dbReference type="KEGG" id="ecx:EcHS_A2596"/>
<dbReference type="HOGENOM" id="CLU_062658_6_0_6"/>
<dbReference type="GO" id="GO:0005829">
    <property type="term" value="C:cytosol"/>
    <property type="evidence" value="ECO:0007669"/>
    <property type="project" value="TreeGrafter"/>
</dbReference>
<dbReference type="GO" id="GO:0016818">
    <property type="term" value="F:hydrolase activity, acting on acid anhydrides, in phosphorus-containing anhydrides"/>
    <property type="evidence" value="ECO:0007669"/>
    <property type="project" value="InterPro"/>
</dbReference>
<dbReference type="GO" id="GO:0046872">
    <property type="term" value="F:metal ion binding"/>
    <property type="evidence" value="ECO:0007669"/>
    <property type="project" value="UniProtKB-KW"/>
</dbReference>
<dbReference type="GO" id="GO:0006753">
    <property type="term" value="P:nucleoside phosphate metabolic process"/>
    <property type="evidence" value="ECO:0007669"/>
    <property type="project" value="TreeGrafter"/>
</dbReference>
<dbReference type="GO" id="GO:0019693">
    <property type="term" value="P:ribose phosphate metabolic process"/>
    <property type="evidence" value="ECO:0007669"/>
    <property type="project" value="TreeGrafter"/>
</dbReference>
<dbReference type="CDD" id="cd24157">
    <property type="entry name" value="NUDIX_GDPMK"/>
    <property type="match status" value="1"/>
</dbReference>
<dbReference type="FunFam" id="3.90.79.10:FF:000010">
    <property type="entry name" value="GDP-mannose pyrophosphatase NudK"/>
    <property type="match status" value="1"/>
</dbReference>
<dbReference type="Gene3D" id="3.90.79.10">
    <property type="entry name" value="Nucleoside Triphosphate Pyrophosphohydrolase"/>
    <property type="match status" value="1"/>
</dbReference>
<dbReference type="InterPro" id="IPR004385">
    <property type="entry name" value="NDP_pyrophosphatase"/>
</dbReference>
<dbReference type="InterPro" id="IPR015797">
    <property type="entry name" value="NUDIX_hydrolase-like_dom_sf"/>
</dbReference>
<dbReference type="InterPro" id="IPR000086">
    <property type="entry name" value="NUDIX_hydrolase_dom"/>
</dbReference>
<dbReference type="NCBIfam" id="TIGR00052">
    <property type="entry name" value="nudix-type nucleoside diphosphatase, YffH/AdpP family"/>
    <property type="match status" value="1"/>
</dbReference>
<dbReference type="NCBIfam" id="NF011585">
    <property type="entry name" value="PRK15009.1"/>
    <property type="match status" value="1"/>
</dbReference>
<dbReference type="PANTHER" id="PTHR11839:SF18">
    <property type="entry name" value="NUDIX HYDROLASE DOMAIN-CONTAINING PROTEIN"/>
    <property type="match status" value="1"/>
</dbReference>
<dbReference type="PANTHER" id="PTHR11839">
    <property type="entry name" value="UDP/ADP-SUGAR PYROPHOSPHATASE"/>
    <property type="match status" value="1"/>
</dbReference>
<dbReference type="Pfam" id="PF00293">
    <property type="entry name" value="NUDIX"/>
    <property type="match status" value="1"/>
</dbReference>
<dbReference type="SUPFAM" id="SSF55811">
    <property type="entry name" value="Nudix"/>
    <property type="match status" value="1"/>
</dbReference>
<dbReference type="PROSITE" id="PS51462">
    <property type="entry name" value="NUDIX"/>
    <property type="match status" value="1"/>
</dbReference>